<evidence type="ECO:0000250" key="1"/>
<evidence type="ECO:0000250" key="2">
    <source>
        <dbReference type="UniProtKB" id="O00548"/>
    </source>
</evidence>
<evidence type="ECO:0000250" key="3">
    <source>
        <dbReference type="UniProtKB" id="P10041"/>
    </source>
</evidence>
<evidence type="ECO:0000250" key="4">
    <source>
        <dbReference type="UniProtKB" id="P97677"/>
    </source>
</evidence>
<evidence type="ECO:0000255" key="5"/>
<evidence type="ECO:0000255" key="6">
    <source>
        <dbReference type="PROSITE-ProRule" id="PRU00076"/>
    </source>
</evidence>
<evidence type="ECO:0000255" key="7">
    <source>
        <dbReference type="PROSITE-ProRule" id="PRU00377"/>
    </source>
</evidence>
<evidence type="ECO:0000256" key="8">
    <source>
        <dbReference type="SAM" id="MobiDB-lite"/>
    </source>
</evidence>
<evidence type="ECO:0000269" key="9">
    <source>
    </source>
</evidence>
<evidence type="ECO:0000269" key="10">
    <source>
    </source>
</evidence>
<evidence type="ECO:0000269" key="11">
    <source>
    </source>
</evidence>
<evidence type="ECO:0000269" key="12">
    <source>
    </source>
</evidence>
<evidence type="ECO:0000269" key="13">
    <source>
    </source>
</evidence>
<evidence type="ECO:0000269" key="14">
    <source>
    </source>
</evidence>
<evidence type="ECO:0000269" key="15">
    <source>
    </source>
</evidence>
<evidence type="ECO:0000269" key="16">
    <source>
    </source>
</evidence>
<evidence type="ECO:0000269" key="17">
    <source>
    </source>
</evidence>
<evidence type="ECO:0000269" key="18">
    <source>
    </source>
</evidence>
<evidence type="ECO:0000269" key="19">
    <source>
    </source>
</evidence>
<evidence type="ECO:0000269" key="20">
    <source>
    </source>
</evidence>
<evidence type="ECO:0000269" key="21">
    <source>
    </source>
</evidence>
<evidence type="ECO:0000269" key="22">
    <source>
    </source>
</evidence>
<evidence type="ECO:0000269" key="23">
    <source>
    </source>
</evidence>
<evidence type="ECO:0000269" key="24">
    <source>
    </source>
</evidence>
<evidence type="ECO:0000269" key="25">
    <source>
    </source>
</evidence>
<evidence type="ECO:0000269" key="26">
    <source>
    </source>
</evidence>
<evidence type="ECO:0000269" key="27">
    <source>
    </source>
</evidence>
<evidence type="ECO:0000269" key="28">
    <source>
    </source>
</evidence>
<evidence type="ECO:0000269" key="29">
    <source>
    </source>
</evidence>
<evidence type="ECO:0000269" key="30">
    <source>
    </source>
</evidence>
<evidence type="ECO:0000269" key="31">
    <source>
    </source>
</evidence>
<evidence type="ECO:0000269" key="32">
    <source>
    </source>
</evidence>
<evidence type="ECO:0000269" key="33">
    <source>
    </source>
</evidence>
<evidence type="ECO:0000269" key="34">
    <source>
    </source>
</evidence>
<evidence type="ECO:0000269" key="35">
    <source>
    </source>
</evidence>
<evidence type="ECO:0000269" key="36">
    <source>
    </source>
</evidence>
<evidence type="ECO:0000269" key="37">
    <source>
    </source>
</evidence>
<evidence type="ECO:0000269" key="38">
    <source>
    </source>
</evidence>
<evidence type="ECO:0000269" key="39">
    <source>
    </source>
</evidence>
<evidence type="ECO:0000269" key="40">
    <source>
    </source>
</evidence>
<evidence type="ECO:0000269" key="41">
    <source>
    </source>
</evidence>
<evidence type="ECO:0000269" key="42">
    <source>
    </source>
</evidence>
<evidence type="ECO:0000269" key="43">
    <source>
    </source>
</evidence>
<evidence type="ECO:0000303" key="44">
    <source>
    </source>
</evidence>
<evidence type="ECO:0000305" key="45"/>
<evidence type="ECO:0000305" key="46">
    <source>
    </source>
</evidence>
<gene>
    <name type="primary">Dll1</name>
</gene>
<proteinExistence type="evidence at protein level"/>
<keyword id="KW-0965">Cell junction</keyword>
<keyword id="KW-1003">Cell membrane</keyword>
<keyword id="KW-0217">Developmental protein</keyword>
<keyword id="KW-0221">Differentiation</keyword>
<keyword id="KW-0903">Direct protein sequencing</keyword>
<keyword id="KW-1015">Disulfide bond</keyword>
<keyword id="KW-0245">EGF-like domain</keyword>
<keyword id="KW-0325">Glycoprotein</keyword>
<keyword id="KW-1017">Isopeptide bond</keyword>
<keyword id="KW-0472">Membrane</keyword>
<keyword id="KW-0914">Notch signaling pathway</keyword>
<keyword id="KW-0539">Nucleus</keyword>
<keyword id="KW-0597">Phosphoprotein</keyword>
<keyword id="KW-1185">Reference proteome</keyword>
<keyword id="KW-0677">Repeat</keyword>
<keyword id="KW-0732">Signal</keyword>
<keyword id="KW-0812">Transmembrane</keyword>
<keyword id="KW-1133">Transmembrane helix</keyword>
<keyword id="KW-0832">Ubl conjugation</keyword>
<accession>Q61483</accession>
<accession>Q6PFV7</accession>
<name>DLL1_MOUSE</name>
<dbReference type="EMBL" id="X80903">
    <property type="protein sequence ID" value="CAA56865.1"/>
    <property type="molecule type" value="mRNA"/>
</dbReference>
<dbReference type="EMBL" id="AY497019">
    <property type="protein sequence ID" value="AAR30869.1"/>
    <property type="molecule type" value="Genomic_DNA"/>
</dbReference>
<dbReference type="EMBL" id="CH466630">
    <property type="protein sequence ID" value="EDL20466.1"/>
    <property type="molecule type" value="Genomic_DNA"/>
</dbReference>
<dbReference type="EMBL" id="BC057400">
    <property type="protein sequence ID" value="AAH57400.1"/>
    <property type="molecule type" value="mRNA"/>
</dbReference>
<dbReference type="EMBL" id="BC065063">
    <property type="protein sequence ID" value="AAH65063.1"/>
    <property type="molecule type" value="mRNA"/>
</dbReference>
<dbReference type="CCDS" id="CCDS37452.1"/>
<dbReference type="PIR" id="I48324">
    <property type="entry name" value="I48324"/>
</dbReference>
<dbReference type="RefSeq" id="NP_001365971.1">
    <property type="nucleotide sequence ID" value="NM_001379042.1"/>
</dbReference>
<dbReference type="RefSeq" id="NP_031891.2">
    <property type="nucleotide sequence ID" value="NM_007865.3"/>
</dbReference>
<dbReference type="SMR" id="Q61483"/>
<dbReference type="BioGRID" id="199232">
    <property type="interactions" value="7"/>
</dbReference>
<dbReference type="DIP" id="DIP-32600N"/>
<dbReference type="FunCoup" id="Q61483">
    <property type="interactions" value="494"/>
</dbReference>
<dbReference type="IntAct" id="Q61483">
    <property type="interactions" value="8"/>
</dbReference>
<dbReference type="MINT" id="Q61483"/>
<dbReference type="STRING" id="10090.ENSMUSP00000014917"/>
<dbReference type="GlyCosmos" id="Q61483">
    <property type="glycosylation" value="1 site, No reported glycans"/>
</dbReference>
<dbReference type="GlyGen" id="Q61483">
    <property type="glycosylation" value="2 sites, 1 N-linked glycan (1 site)"/>
</dbReference>
<dbReference type="iPTMnet" id="Q61483"/>
<dbReference type="PhosphoSitePlus" id="Q61483"/>
<dbReference type="PaxDb" id="10090-ENSMUSP00000014917"/>
<dbReference type="ProteomicsDB" id="279687"/>
<dbReference type="ABCD" id="Q61483">
    <property type="antibodies" value="5 sequenced antibodies"/>
</dbReference>
<dbReference type="Antibodypedia" id="20091">
    <property type="antibodies" value="556 antibodies from 41 providers"/>
</dbReference>
<dbReference type="DNASU" id="13388"/>
<dbReference type="Ensembl" id="ENSMUST00000014917.8">
    <property type="protein sequence ID" value="ENSMUSP00000014917.8"/>
    <property type="gene ID" value="ENSMUSG00000014773.14"/>
</dbReference>
<dbReference type="GeneID" id="13388"/>
<dbReference type="KEGG" id="mmu:13388"/>
<dbReference type="UCSC" id="uc008aoi.2">
    <property type="organism name" value="mouse"/>
</dbReference>
<dbReference type="AGR" id="MGI:104659"/>
<dbReference type="CTD" id="28514"/>
<dbReference type="MGI" id="MGI:104659">
    <property type="gene designation" value="Dll1"/>
</dbReference>
<dbReference type="VEuPathDB" id="HostDB:ENSMUSG00000014773"/>
<dbReference type="eggNOG" id="KOG1217">
    <property type="taxonomic scope" value="Eukaryota"/>
</dbReference>
<dbReference type="GeneTree" id="ENSGT00940000159781"/>
<dbReference type="HOGENOM" id="CLU_012574_1_0_1"/>
<dbReference type="InParanoid" id="Q61483"/>
<dbReference type="OMA" id="HYTCSET"/>
<dbReference type="OrthoDB" id="283575at2759"/>
<dbReference type="PhylomeDB" id="Q61483"/>
<dbReference type="TreeFam" id="TF351835"/>
<dbReference type="Reactome" id="R-MMU-2979096">
    <property type="pathway name" value="NOTCH2 Activation and Transmission of Signal to the Nucleus"/>
</dbReference>
<dbReference type="Reactome" id="R-MMU-9013507">
    <property type="pathway name" value="NOTCH3 Activation and Transmission of Signal to the Nucleus"/>
</dbReference>
<dbReference type="BioGRID-ORCS" id="13388">
    <property type="hits" value="4 hits in 76 CRISPR screens"/>
</dbReference>
<dbReference type="ChiTaRS" id="Dll1">
    <property type="organism name" value="mouse"/>
</dbReference>
<dbReference type="PRO" id="PR:Q61483"/>
<dbReference type="Proteomes" id="UP000000589">
    <property type="component" value="Chromosome 17"/>
</dbReference>
<dbReference type="RNAct" id="Q61483">
    <property type="molecule type" value="protein"/>
</dbReference>
<dbReference type="Bgee" id="ENSMUSG00000014773">
    <property type="expression patterns" value="Expressed in interdigital region and 246 other cell types or tissues"/>
</dbReference>
<dbReference type="ExpressionAtlas" id="Q61483">
    <property type="expression patterns" value="baseline and differential"/>
</dbReference>
<dbReference type="GO" id="GO:0005912">
    <property type="term" value="C:adherens junction"/>
    <property type="evidence" value="ECO:0000314"/>
    <property type="project" value="UniProtKB"/>
</dbReference>
<dbReference type="GO" id="GO:0016324">
    <property type="term" value="C:apical plasma membrane"/>
    <property type="evidence" value="ECO:0000314"/>
    <property type="project" value="UniProtKB"/>
</dbReference>
<dbReference type="GO" id="GO:0031410">
    <property type="term" value="C:cytoplasmic vesicle"/>
    <property type="evidence" value="ECO:0000314"/>
    <property type="project" value="MGI"/>
</dbReference>
<dbReference type="GO" id="GO:0045121">
    <property type="term" value="C:membrane raft"/>
    <property type="evidence" value="ECO:0000314"/>
    <property type="project" value="UniProtKB"/>
</dbReference>
<dbReference type="GO" id="GO:0005634">
    <property type="term" value="C:nucleus"/>
    <property type="evidence" value="ECO:0007669"/>
    <property type="project" value="UniProtKB-SubCell"/>
</dbReference>
<dbReference type="GO" id="GO:0005886">
    <property type="term" value="C:plasma membrane"/>
    <property type="evidence" value="ECO:0000314"/>
    <property type="project" value="MGI"/>
</dbReference>
<dbReference type="GO" id="GO:0005509">
    <property type="term" value="F:calcium ion binding"/>
    <property type="evidence" value="ECO:0007669"/>
    <property type="project" value="InterPro"/>
</dbReference>
<dbReference type="GO" id="GO:0005112">
    <property type="term" value="F:Notch binding"/>
    <property type="evidence" value="ECO:0000353"/>
    <property type="project" value="UniProtKB"/>
</dbReference>
<dbReference type="GO" id="GO:0048018">
    <property type="term" value="F:receptor ligand activity"/>
    <property type="evidence" value="ECO:0007669"/>
    <property type="project" value="Ensembl"/>
</dbReference>
<dbReference type="GO" id="GO:0097110">
    <property type="term" value="F:scaffold protein binding"/>
    <property type="evidence" value="ECO:0000353"/>
    <property type="project" value="UniProtKB"/>
</dbReference>
<dbReference type="GO" id="GO:0030957">
    <property type="term" value="F:Tat protein binding"/>
    <property type="evidence" value="ECO:0007669"/>
    <property type="project" value="Ensembl"/>
</dbReference>
<dbReference type="GO" id="GO:0009887">
    <property type="term" value="P:animal organ morphogenesis"/>
    <property type="evidence" value="ECO:0000303"/>
    <property type="project" value="UniProtKB"/>
</dbReference>
<dbReference type="GO" id="GO:0014002">
    <property type="term" value="P:astrocyte development"/>
    <property type="evidence" value="ECO:0000315"/>
    <property type="project" value="UniProtKB"/>
</dbReference>
<dbReference type="GO" id="GO:0009912">
    <property type="term" value="P:auditory receptor cell fate commitment"/>
    <property type="evidence" value="ECO:0000303"/>
    <property type="project" value="UniProtKB"/>
</dbReference>
<dbReference type="GO" id="GO:0007267">
    <property type="term" value="P:cell-cell signaling"/>
    <property type="evidence" value="ECO:0000314"/>
    <property type="project" value="MGI"/>
</dbReference>
<dbReference type="GO" id="GO:0021688">
    <property type="term" value="P:cerebellar molecular layer formation"/>
    <property type="evidence" value="ECO:0000315"/>
    <property type="project" value="UniProtKB"/>
</dbReference>
<dbReference type="GO" id="GO:0021693">
    <property type="term" value="P:cerebellar Purkinje cell layer structural organization"/>
    <property type="evidence" value="ECO:0000315"/>
    <property type="project" value="UniProtKB"/>
</dbReference>
<dbReference type="GO" id="GO:0072583">
    <property type="term" value="P:clathrin-dependent endocytosis"/>
    <property type="evidence" value="ECO:0000250"/>
    <property type="project" value="UniProtKB"/>
</dbReference>
<dbReference type="GO" id="GO:0007386">
    <property type="term" value="P:compartment pattern specification"/>
    <property type="evidence" value="ECO:0000315"/>
    <property type="project" value="MGI"/>
</dbReference>
<dbReference type="GO" id="GO:0007368">
    <property type="term" value="P:determination of left/right symmetry"/>
    <property type="evidence" value="ECO:0000315"/>
    <property type="project" value="MGI"/>
</dbReference>
<dbReference type="GO" id="GO:0097102">
    <property type="term" value="P:endothelial tip cell fate specification"/>
    <property type="evidence" value="ECO:0000315"/>
    <property type="project" value="UniProtKB"/>
</dbReference>
<dbReference type="GO" id="GO:0097009">
    <property type="term" value="P:energy homeostasis"/>
    <property type="evidence" value="ECO:0000315"/>
    <property type="project" value="UniProtKB"/>
</dbReference>
<dbReference type="GO" id="GO:0001947">
    <property type="term" value="P:heart looping"/>
    <property type="evidence" value="ECO:0000315"/>
    <property type="project" value="BHF-UCL"/>
</dbReference>
<dbReference type="GO" id="GO:0042386">
    <property type="term" value="P:hemocyte differentiation"/>
    <property type="evidence" value="ECO:0000314"/>
    <property type="project" value="MGI"/>
</dbReference>
<dbReference type="GO" id="GO:0001701">
    <property type="term" value="P:in utero embryonic development"/>
    <property type="evidence" value="ECO:0000303"/>
    <property type="project" value="UniProtKB"/>
</dbReference>
<dbReference type="GO" id="GO:0002085">
    <property type="term" value="P:inhibition of neuroepithelial cell differentiation"/>
    <property type="evidence" value="ECO:0000315"/>
    <property type="project" value="MGI"/>
</dbReference>
<dbReference type="GO" id="GO:0042491">
    <property type="term" value="P:inner ear auditory receptor cell differentiation"/>
    <property type="evidence" value="ECO:0000315"/>
    <property type="project" value="MGI"/>
</dbReference>
<dbReference type="GO" id="GO:0048839">
    <property type="term" value="P:inner ear development"/>
    <property type="evidence" value="ECO:0000315"/>
    <property type="project" value="MGI"/>
</dbReference>
<dbReference type="GO" id="GO:0042472">
    <property type="term" value="P:inner ear morphogenesis"/>
    <property type="evidence" value="ECO:0000303"/>
    <property type="project" value="UniProtKB"/>
</dbReference>
<dbReference type="GO" id="GO:0046331">
    <property type="term" value="P:lateral inhibition"/>
    <property type="evidence" value="ECO:0000314"/>
    <property type="project" value="UniProtKB"/>
</dbReference>
<dbReference type="GO" id="GO:0070986">
    <property type="term" value="P:left/right axis specification"/>
    <property type="evidence" value="ECO:0000315"/>
    <property type="project" value="BHF-UCL"/>
</dbReference>
<dbReference type="GO" id="GO:0072070">
    <property type="term" value="P:loop of Henle development"/>
    <property type="evidence" value="ECO:0000270"/>
    <property type="project" value="UniProtKB"/>
</dbReference>
<dbReference type="GO" id="GO:0002315">
    <property type="term" value="P:marginal zone B cell differentiation"/>
    <property type="evidence" value="ECO:0000315"/>
    <property type="project" value="UniProtKB"/>
</dbReference>
<dbReference type="GO" id="GO:0030099">
    <property type="term" value="P:myeloid cell differentiation"/>
    <property type="evidence" value="ECO:0000314"/>
    <property type="project" value="MGI"/>
</dbReference>
<dbReference type="GO" id="GO:2000726">
    <property type="term" value="P:negative regulation of cardiac muscle cell differentiation"/>
    <property type="evidence" value="ECO:0000315"/>
    <property type="project" value="BHF-UCL"/>
</dbReference>
<dbReference type="GO" id="GO:0045596">
    <property type="term" value="P:negative regulation of cell differentiation"/>
    <property type="evidence" value="ECO:0000315"/>
    <property type="project" value="UniProtKB"/>
</dbReference>
<dbReference type="GO" id="GO:0008285">
    <property type="term" value="P:negative regulation of cell population proliferation"/>
    <property type="evidence" value="ECO:0000315"/>
    <property type="project" value="UniProtKB"/>
</dbReference>
<dbReference type="GO" id="GO:0045605">
    <property type="term" value="P:negative regulation of epidermal cell differentiation"/>
    <property type="evidence" value="ECO:0000315"/>
    <property type="project" value="UniProtKB"/>
</dbReference>
<dbReference type="GO" id="GO:0030857">
    <property type="term" value="P:negative regulation of epithelial cell differentiation"/>
    <property type="evidence" value="ECO:0000315"/>
    <property type="project" value="UniProtKB"/>
</dbReference>
<dbReference type="GO" id="GO:0034351">
    <property type="term" value="P:negative regulation of glial cell apoptotic process"/>
    <property type="evidence" value="ECO:0000315"/>
    <property type="project" value="UniProtKB"/>
</dbReference>
<dbReference type="GO" id="GO:0045611">
    <property type="term" value="P:negative regulation of hemocyte differentiation"/>
    <property type="evidence" value="ECO:0000314"/>
    <property type="project" value="MGI"/>
</dbReference>
<dbReference type="GO" id="GO:0045608">
    <property type="term" value="P:negative regulation of inner ear auditory receptor cell differentiation"/>
    <property type="evidence" value="ECO:0000315"/>
    <property type="project" value="MGI"/>
</dbReference>
<dbReference type="GO" id="GO:0032693">
    <property type="term" value="P:negative regulation of interleukin-10 production"/>
    <property type="evidence" value="ECO:0007669"/>
    <property type="project" value="Ensembl"/>
</dbReference>
<dbReference type="GO" id="GO:0045638">
    <property type="term" value="P:negative regulation of myeloid cell differentiation"/>
    <property type="evidence" value="ECO:0000314"/>
    <property type="project" value="MGI"/>
</dbReference>
<dbReference type="GO" id="GO:0045662">
    <property type="term" value="P:negative regulation of myoblast differentiation"/>
    <property type="evidence" value="ECO:0000315"/>
    <property type="project" value="UniProtKB"/>
</dbReference>
<dbReference type="GO" id="GO:0045665">
    <property type="term" value="P:negative regulation of neuron differentiation"/>
    <property type="evidence" value="ECO:0000315"/>
    <property type="project" value="UniProtKB"/>
</dbReference>
<dbReference type="GO" id="GO:0072006">
    <property type="term" value="P:nephron development"/>
    <property type="evidence" value="ECO:0000315"/>
    <property type="project" value="UniProtKB"/>
</dbReference>
<dbReference type="GO" id="GO:0007399">
    <property type="term" value="P:nervous system development"/>
    <property type="evidence" value="ECO:0000303"/>
    <property type="project" value="UniProtKB"/>
</dbReference>
<dbReference type="GO" id="GO:0060563">
    <property type="term" value="P:neuroepithelial cell differentiation"/>
    <property type="evidence" value="ECO:0000315"/>
    <property type="project" value="MGI"/>
</dbReference>
<dbReference type="GO" id="GO:0030182">
    <property type="term" value="P:neuron differentiation"/>
    <property type="evidence" value="ECO:0000315"/>
    <property type="project" value="MGI"/>
</dbReference>
<dbReference type="GO" id="GO:0048665">
    <property type="term" value="P:neuron fate specification"/>
    <property type="evidence" value="ECO:0000314"/>
    <property type="project" value="UniProtKB"/>
</dbReference>
<dbReference type="GO" id="GO:0097150">
    <property type="term" value="P:neuronal stem cell population maintenance"/>
    <property type="evidence" value="ECO:0000315"/>
    <property type="project" value="UniProtKB"/>
</dbReference>
<dbReference type="GO" id="GO:0007219">
    <property type="term" value="P:Notch signaling pathway"/>
    <property type="evidence" value="ECO:0000315"/>
    <property type="project" value="UniProtKB"/>
</dbReference>
<dbReference type="GO" id="GO:0060853">
    <property type="term" value="P:Notch signaling pathway involved in arterial endothelial cell fate commitment"/>
    <property type="evidence" value="ECO:0000315"/>
    <property type="project" value="UniProtKB"/>
</dbReference>
<dbReference type="GO" id="GO:0042475">
    <property type="term" value="P:odontogenesis of dentin-containing tooth"/>
    <property type="evidence" value="ECO:0000303"/>
    <property type="project" value="UniProtKB"/>
</dbReference>
<dbReference type="GO" id="GO:0035265">
    <property type="term" value="P:organ growth"/>
    <property type="evidence" value="ECO:0000315"/>
    <property type="project" value="UniProtKB"/>
</dbReference>
<dbReference type="GO" id="GO:0008284">
    <property type="term" value="P:positive regulation of cell population proliferation"/>
    <property type="evidence" value="ECO:0000315"/>
    <property type="project" value="UniProtKB"/>
</dbReference>
<dbReference type="GO" id="GO:0045807">
    <property type="term" value="P:positive regulation of endocytosis"/>
    <property type="evidence" value="ECO:0000314"/>
    <property type="project" value="UniProtKB"/>
</dbReference>
<dbReference type="GO" id="GO:0010628">
    <property type="term" value="P:positive regulation of gene expression"/>
    <property type="evidence" value="ECO:0000315"/>
    <property type="project" value="MGI"/>
</dbReference>
<dbReference type="GO" id="GO:0045747">
    <property type="term" value="P:positive regulation of Notch signaling pathway"/>
    <property type="evidence" value="ECO:0000314"/>
    <property type="project" value="UniProtKB"/>
</dbReference>
<dbReference type="GO" id="GO:0048633">
    <property type="term" value="P:positive regulation of skeletal muscle tissue growth"/>
    <property type="evidence" value="ECO:0000315"/>
    <property type="project" value="UniProtKB"/>
</dbReference>
<dbReference type="GO" id="GO:1903672">
    <property type="term" value="P:positive regulation of sprouting angiogenesis"/>
    <property type="evidence" value="ECO:0000315"/>
    <property type="project" value="UniProtKB"/>
</dbReference>
<dbReference type="GO" id="GO:0045944">
    <property type="term" value="P:positive regulation of transcription by RNA polymerase II"/>
    <property type="evidence" value="ECO:0000315"/>
    <property type="project" value="BHF-UCL"/>
</dbReference>
<dbReference type="GO" id="GO:0072014">
    <property type="term" value="P:proximal tubule development"/>
    <property type="evidence" value="ECO:0000270"/>
    <property type="project" value="UniProtKB"/>
</dbReference>
<dbReference type="GO" id="GO:0009954">
    <property type="term" value="P:proximal/distal pattern formation"/>
    <property type="evidence" value="ECO:0000315"/>
    <property type="project" value="UniProtKB"/>
</dbReference>
<dbReference type="GO" id="GO:0008217">
    <property type="term" value="P:regulation of blood pressure"/>
    <property type="evidence" value="ECO:0000315"/>
    <property type="project" value="UniProtKB"/>
</dbReference>
<dbReference type="GO" id="GO:0030155">
    <property type="term" value="P:regulation of cell adhesion"/>
    <property type="evidence" value="ECO:0000315"/>
    <property type="project" value="UniProtKB"/>
</dbReference>
<dbReference type="GO" id="GO:0051302">
    <property type="term" value="P:regulation of cell division"/>
    <property type="evidence" value="ECO:0000315"/>
    <property type="project" value="UniProtKB"/>
</dbReference>
<dbReference type="GO" id="GO:0040008">
    <property type="term" value="P:regulation of growth"/>
    <property type="evidence" value="ECO:0000315"/>
    <property type="project" value="UniProtKB"/>
</dbReference>
<dbReference type="GO" id="GO:0050767">
    <property type="term" value="P:regulation of neurogenesis"/>
    <property type="evidence" value="ECO:0000315"/>
    <property type="project" value="UniProtKB"/>
</dbReference>
<dbReference type="GO" id="GO:0048631">
    <property type="term" value="P:regulation of skeletal muscle tissue growth"/>
    <property type="evidence" value="ECO:0000315"/>
    <property type="project" value="UniProtKB"/>
</dbReference>
<dbReference type="GO" id="GO:0014807">
    <property type="term" value="P:regulation of somitogenesis"/>
    <property type="evidence" value="ECO:0000315"/>
    <property type="project" value="UniProtKB"/>
</dbReference>
<dbReference type="GO" id="GO:0030947">
    <property type="term" value="P:regulation of vascular endothelial growth factor receptor signaling pathway"/>
    <property type="evidence" value="ECO:0000315"/>
    <property type="project" value="BHF-UCL"/>
</dbReference>
<dbReference type="GO" id="GO:1900746">
    <property type="term" value="P:regulation of vascular endothelial growth factor signaling pathway"/>
    <property type="evidence" value="ECO:0000315"/>
    <property type="project" value="UniProtKB"/>
</dbReference>
<dbReference type="GO" id="GO:0060041">
    <property type="term" value="P:retina development in camera-type eye"/>
    <property type="evidence" value="ECO:0000315"/>
    <property type="project" value="UniProtKB"/>
</dbReference>
<dbReference type="GO" id="GO:0060042">
    <property type="term" value="P:retina morphogenesis in camera-type eye"/>
    <property type="evidence" value="ECO:0000315"/>
    <property type="project" value="UniProtKB"/>
</dbReference>
<dbReference type="GO" id="GO:0048630">
    <property type="term" value="P:skeletal muscle tissue growth"/>
    <property type="evidence" value="ECO:0000315"/>
    <property type="project" value="UniProtKB"/>
</dbReference>
<dbReference type="GO" id="GO:0098773">
    <property type="term" value="P:skin epidermis development"/>
    <property type="evidence" value="ECO:0000315"/>
    <property type="project" value="UniProtKB"/>
</dbReference>
<dbReference type="GO" id="GO:0001757">
    <property type="term" value="P:somite specification"/>
    <property type="evidence" value="ECO:0000315"/>
    <property type="project" value="MGI"/>
</dbReference>
<dbReference type="GO" id="GO:0001756">
    <property type="term" value="P:somitogenesis"/>
    <property type="evidence" value="ECO:0000315"/>
    <property type="project" value="UniProtKB"/>
</dbReference>
<dbReference type="GO" id="GO:0021510">
    <property type="term" value="P:spinal cord development"/>
    <property type="evidence" value="ECO:0000315"/>
    <property type="project" value="UniProtKB"/>
</dbReference>
<dbReference type="GO" id="GO:0003323">
    <property type="term" value="P:type B pancreatic cell development"/>
    <property type="evidence" value="ECO:0000315"/>
    <property type="project" value="UniProtKB"/>
</dbReference>
<dbReference type="CDD" id="cd00054">
    <property type="entry name" value="EGF_CA"/>
    <property type="match status" value="6"/>
</dbReference>
<dbReference type="FunFam" id="2.10.25.10:FF:000018">
    <property type="entry name" value="Delta-like 1"/>
    <property type="match status" value="1"/>
</dbReference>
<dbReference type="FunFam" id="2.10.25.10:FF:000012">
    <property type="entry name" value="Delta-like protein"/>
    <property type="match status" value="3"/>
</dbReference>
<dbReference type="FunFam" id="2.10.25.10:FF:000064">
    <property type="entry name" value="Delta-like protein"/>
    <property type="match status" value="1"/>
</dbReference>
<dbReference type="FunFam" id="2.10.25.140:FF:000001">
    <property type="entry name" value="Delta-like protein"/>
    <property type="match status" value="1"/>
</dbReference>
<dbReference type="FunFam" id="2.60.40.3510:FF:000002">
    <property type="entry name" value="Delta-like protein"/>
    <property type="match status" value="1"/>
</dbReference>
<dbReference type="FunFam" id="2.10.25.10:FF:000004">
    <property type="entry name" value="Neurogenic locus notch 1"/>
    <property type="match status" value="1"/>
</dbReference>
<dbReference type="FunFam" id="2.10.25.10:FF:000565">
    <property type="entry name" value="Predicted protein"/>
    <property type="match status" value="1"/>
</dbReference>
<dbReference type="Gene3D" id="2.10.25.140">
    <property type="match status" value="1"/>
</dbReference>
<dbReference type="Gene3D" id="2.60.40.3510">
    <property type="match status" value="1"/>
</dbReference>
<dbReference type="Gene3D" id="2.10.25.10">
    <property type="entry name" value="Laminin"/>
    <property type="match status" value="7"/>
</dbReference>
<dbReference type="InterPro" id="IPR001774">
    <property type="entry name" value="DSL"/>
</dbReference>
<dbReference type="InterPro" id="IPR001881">
    <property type="entry name" value="EGF-like_Ca-bd_dom"/>
</dbReference>
<dbReference type="InterPro" id="IPR000742">
    <property type="entry name" value="EGF-like_dom"/>
</dbReference>
<dbReference type="InterPro" id="IPR000152">
    <property type="entry name" value="EGF-type_Asp/Asn_hydroxyl_site"/>
</dbReference>
<dbReference type="InterPro" id="IPR018097">
    <property type="entry name" value="EGF_Ca-bd_CS"/>
</dbReference>
<dbReference type="InterPro" id="IPR009030">
    <property type="entry name" value="Growth_fac_rcpt_cys_sf"/>
</dbReference>
<dbReference type="InterPro" id="IPR051022">
    <property type="entry name" value="Notch_Cell-Fate_Det"/>
</dbReference>
<dbReference type="InterPro" id="IPR011651">
    <property type="entry name" value="Notch_ligand_N"/>
</dbReference>
<dbReference type="PANTHER" id="PTHR24049">
    <property type="entry name" value="CRUMBS FAMILY MEMBER"/>
    <property type="match status" value="1"/>
</dbReference>
<dbReference type="Pfam" id="PF01414">
    <property type="entry name" value="DSL"/>
    <property type="match status" value="1"/>
</dbReference>
<dbReference type="Pfam" id="PF00008">
    <property type="entry name" value="EGF"/>
    <property type="match status" value="6"/>
</dbReference>
<dbReference type="Pfam" id="PF21700">
    <property type="entry name" value="EGF_DL_JAG"/>
    <property type="match status" value="1"/>
</dbReference>
<dbReference type="Pfam" id="PF07657">
    <property type="entry name" value="MNNL"/>
    <property type="match status" value="1"/>
</dbReference>
<dbReference type="PRINTS" id="PR00010">
    <property type="entry name" value="EGFBLOOD"/>
</dbReference>
<dbReference type="SMART" id="SM00051">
    <property type="entry name" value="DSL"/>
    <property type="match status" value="1"/>
</dbReference>
<dbReference type="SMART" id="SM00181">
    <property type="entry name" value="EGF"/>
    <property type="match status" value="8"/>
</dbReference>
<dbReference type="SMART" id="SM00179">
    <property type="entry name" value="EGF_CA"/>
    <property type="match status" value="6"/>
</dbReference>
<dbReference type="SUPFAM" id="SSF57196">
    <property type="entry name" value="EGF/Laminin"/>
    <property type="match status" value="3"/>
</dbReference>
<dbReference type="SUPFAM" id="SSF57184">
    <property type="entry name" value="Growth factor receptor domain"/>
    <property type="match status" value="1"/>
</dbReference>
<dbReference type="PROSITE" id="PS00010">
    <property type="entry name" value="ASX_HYDROXYL"/>
    <property type="match status" value="3"/>
</dbReference>
<dbReference type="PROSITE" id="PS51051">
    <property type="entry name" value="DSL"/>
    <property type="match status" value="1"/>
</dbReference>
<dbReference type="PROSITE" id="PS00022">
    <property type="entry name" value="EGF_1"/>
    <property type="match status" value="8"/>
</dbReference>
<dbReference type="PROSITE" id="PS01186">
    <property type="entry name" value="EGF_2"/>
    <property type="match status" value="8"/>
</dbReference>
<dbReference type="PROSITE" id="PS50026">
    <property type="entry name" value="EGF_3"/>
    <property type="match status" value="7"/>
</dbReference>
<dbReference type="PROSITE" id="PS01187">
    <property type="entry name" value="EGF_CA"/>
    <property type="match status" value="2"/>
</dbReference>
<sequence>MGRRSALALAVVSALLCQVWSSGVFELKLQEFVNKKGLLGNRNCCRGGSGPPCACRTFFRVCLKHYQASVSPEPPCTYGSAVTPVLGVDSFSLPDGAGIDPAFSNPIRFPFGFTWPGTFSLIIEALHTDSPDDLATENPERLISRLTTQRHLTVGEEWSQDLHSSGRTDLRYSYRFVCDEHYYGEGCSVFCRPRDDAFGHFTCGDRGEKMCDPGWKGQYCTDPICLPGCDDQHGYCDKPGECKCRVGWQGRYCDECIRYPGCLHGTCQQPWQCNCQEGWGGLFCNQDLNYCTHHKPCRNGATCTNTGQGSYTCSCRPGYTGANCELEVDECAPSPCKNGASCTDLEDSFSCTCPPGFYGKVCELSAMTCADGPCFNGGRCSDNPDGGYTCHCPLGFSGFNCEKKMDLCGSSPCSNGAKCVDLGNSYLCRCQAGFSGRYCEDNVDDCASSPCANGGTCRDSVNDFSCTCPPGYTGKNCSAPVSRCEHAPCHNGATCHQRGQRYMCECAQGYGGPNCQFLLPEPPPGPMVVDLSERHMESQGGPFPWVAVCAGVVLVLLLLLGCAAVVVCVRLKLQKHQPPPEPCGGETETMNNLANCQREKDVSVSIIGATQIKNTNKKADFHGDHGAEKSSFKVRYPTVDYNLVRDLKGDEATVRDTHSKRDTKCQSQSSAGEEKIAPTLRGGEIPDRKRPESVYSTSKDTKYQSVYVLSAEKDECVIATEV</sequence>
<reference key="1">
    <citation type="journal article" date="1995" name="Development">
        <title>Transient and restricted expression during mouse embryogenesis of Dll1, a murine gene closely related to Drosophila Delta.</title>
        <authorList>
            <person name="Bettenhausen B."/>
            <person name="de Angelis M.H."/>
            <person name="Simon D."/>
            <person name="Guenet J.-L."/>
            <person name="Gossler A."/>
        </authorList>
    </citation>
    <scope>NUCLEOTIDE SEQUENCE [MRNA]</scope>
    <scope>DEVELOPMENTAL STAGE</scope>
    <scope>TISSUE SPECIFICITY</scope>
    <scope>FUNCTION</scope>
    <source>
        <strain>C57BL/6 X BALB/c</strain>
        <tissue>Embryo</tissue>
    </source>
</reference>
<reference key="2">
    <citation type="journal article" date="2009" name="PLoS Biol.">
        <title>Lineage-specific biology revealed by a finished genome assembly of the mouse.</title>
        <authorList>
            <person name="Church D.M."/>
            <person name="Goodstadt L."/>
            <person name="Hillier L.W."/>
            <person name="Zody M.C."/>
            <person name="Goldstein S."/>
            <person name="She X."/>
            <person name="Bult C.J."/>
            <person name="Agarwala R."/>
            <person name="Cherry J.L."/>
            <person name="DiCuccio M."/>
            <person name="Hlavina W."/>
            <person name="Kapustin Y."/>
            <person name="Meric P."/>
            <person name="Maglott D."/>
            <person name="Birtle Z."/>
            <person name="Marques A.C."/>
            <person name="Graves T."/>
            <person name="Zhou S."/>
            <person name="Teague B."/>
            <person name="Potamousis K."/>
            <person name="Churas C."/>
            <person name="Place M."/>
            <person name="Herschleb J."/>
            <person name="Runnheim R."/>
            <person name="Forrest D."/>
            <person name="Amos-Landgraf J."/>
            <person name="Schwartz D.C."/>
            <person name="Cheng Z."/>
            <person name="Lindblad-Toh K."/>
            <person name="Eichler E.E."/>
            <person name="Ponting C.P."/>
        </authorList>
    </citation>
    <scope>NUCLEOTIDE SEQUENCE [LARGE SCALE GENOMIC DNA]</scope>
    <source>
        <strain>C57BL/6J</strain>
    </source>
</reference>
<reference key="3">
    <citation type="submission" date="2005-07" db="EMBL/GenBank/DDBJ databases">
        <authorList>
            <person name="Mural R.J."/>
            <person name="Adams M.D."/>
            <person name="Myers E.W."/>
            <person name="Smith H.O."/>
            <person name="Venter J.C."/>
        </authorList>
    </citation>
    <scope>NUCLEOTIDE SEQUENCE [LARGE SCALE GENOMIC DNA]</scope>
</reference>
<reference key="4">
    <citation type="journal article" date="2004" name="Genome Res.">
        <title>The status, quality, and expansion of the NIH full-length cDNA project: the Mammalian Gene Collection (MGC).</title>
        <authorList>
            <consortium name="The MGC Project Team"/>
        </authorList>
    </citation>
    <scope>NUCLEOTIDE SEQUENCE [LARGE SCALE MRNA]</scope>
    <source>
        <strain>C57BL/6J</strain>
        <tissue>Embryonic brain</tissue>
    </source>
</reference>
<reference key="5">
    <citation type="journal article" date="2011" name="EMBO J.">
        <title>MT1-MMP cleaves Dll1 to negatively regulate Notch signalling to maintain normal B-cell development.</title>
        <authorList>
            <person name="Jin G."/>
            <person name="Zhang F."/>
            <person name="Chan K.M."/>
            <person name="Xavier Wong H.L."/>
            <person name="Liu B."/>
            <person name="Cheah K.S."/>
            <person name="Liu X."/>
            <person name="Mauch C."/>
            <person name="Liu D."/>
            <person name="Zhou Z."/>
        </authorList>
    </citation>
    <scope>PROTEIN SEQUENCE OF 527-534 AND 536-543</scope>
    <scope>PROTEOLYTIC CLEAVAGE BY MMP14</scope>
    <scope>INTERACTION WITH MMP14</scope>
    <scope>IDENTIFICATION BY MASS SPECTROMETRY</scope>
    <scope>FUNCTION</scope>
</reference>
<reference key="6">
    <citation type="journal article" date="2003" name="Proc. Natl. Acad. Sci. U.S.A.">
        <title>The Notch ligand Delta1 is sequentially cleaved by an ADAM protease and gamma-secretase.</title>
        <authorList>
            <person name="Six E."/>
            <person name="Ndiaye D."/>
            <person name="Laabi Y."/>
            <person name="Brou C."/>
            <person name="Gupta-Rossi N."/>
            <person name="Israel A."/>
            <person name="Logeat F."/>
        </authorList>
    </citation>
    <scope>PROTEIN SEQUENCE OF 536-554</scope>
    <scope>PROTEOLYTIC CLEAVAGE</scope>
    <scope>HOMODIMERIZATION</scope>
    <scope>INTERACTION WITH PSEN1</scope>
    <scope>SUBCELLULAR LOCATION</scope>
</reference>
<reference key="7">
    <citation type="journal article" date="2000" name="Mol. Cell. Biol.">
        <title>Binding of Delta1, Jagged1, and Jagged2 to Notch2 rapidly induces cleavage, nuclear translocation, and hyperphosphorylation of Notch2.</title>
        <authorList>
            <person name="Shimizu K."/>
            <person name="Chiba S."/>
            <person name="Hosoya N."/>
            <person name="Kumano K."/>
            <person name="Saito T."/>
            <person name="Kurokawa M."/>
            <person name="Kanda Y."/>
            <person name="Hamada Y."/>
            <person name="Hirai H."/>
        </authorList>
    </citation>
    <scope>FUNCTION</scope>
</reference>
<reference key="8">
    <citation type="journal article" date="2004" name="Nat. Immunol.">
        <title>Delta-like 1 is necessary for the generation of marginal zone B cells but not T cells in vivo.</title>
        <authorList>
            <person name="Hozumi K."/>
            <person name="Negishi N."/>
            <person name="Suzuki D."/>
            <person name="Abe N."/>
            <person name="Sotomaru Y."/>
            <person name="Tamaoki N."/>
            <person name="Mailhos C."/>
            <person name="Ish-Horowicz D."/>
            <person name="Habu S."/>
            <person name="Owen M.J."/>
        </authorList>
    </citation>
    <scope>FUNCTION</scope>
</reference>
<reference key="9">
    <citation type="journal article" date="2005" name="J. Biol. Chem.">
        <title>The extracellular matrix protein MAGP-2 interacts with Jagged1 and induces its shedding from the cell surface.</title>
        <authorList>
            <person name="Nehring L.C."/>
            <person name="Miyamoto A."/>
            <person name="Hein P.W."/>
            <person name="Weinmaster G."/>
            <person name="Shipley J.M."/>
        </authorList>
    </citation>
    <scope>INTERACTION WITH MFAP5</scope>
</reference>
<reference key="10">
    <citation type="journal article" date="2005" name="J. Biol. Chem.">
        <title>MAGI1 recruits Dll1 to cadherin-based adherens junctions and stabilizes it on the cell surface.</title>
        <authorList>
            <person name="Mizuhara E."/>
            <person name="Nakatani T."/>
            <person name="Minaki Y."/>
            <person name="Sakamoto Y."/>
            <person name="Ono Y."/>
            <person name="Takai Y."/>
        </authorList>
    </citation>
    <scope>INTERACTION WITH MAGI1</scope>
    <scope>SUBCELLULAR LOCATION</scope>
</reference>
<reference key="11">
    <citation type="journal article" date="2006" name="Development">
        <title>Notch ligands with contrasting functions: Jagged1 and Delta1 in the mouse inner ear.</title>
        <authorList>
            <person name="Brooker R."/>
            <person name="Hozumi K."/>
            <person name="Lewis J."/>
        </authorList>
    </citation>
    <scope>FUNCTION</scope>
    <scope>DISRUPTION PHENOTYPE</scope>
</reference>
<reference key="12">
    <citation type="journal article" date="2006" name="J. Biol. Chem.">
        <title>Neuralized-2 regulates a Notch ligand in cooperation with Mind bomb-1.</title>
        <authorList>
            <person name="Song R."/>
            <person name="Koo B.-K."/>
            <person name="Yoon K.-J."/>
            <person name="Yoon M.-J."/>
            <person name="Yoo K.-W."/>
            <person name="Kim H.-T."/>
            <person name="Oh H.-J."/>
            <person name="Kim Y.-Y."/>
            <person name="Han J.-K."/>
            <person name="Kim C.-H."/>
            <person name="Kong Y.-Y."/>
        </authorList>
    </citation>
    <scope>INTERACTION WITH NEURL1B</scope>
    <scope>UBIQUITINATION</scope>
</reference>
<reference key="13">
    <citation type="journal article" date="2007" name="Proc. Natl. Acad. Sci. U.S.A.">
        <title>Premature myogenic differentiation and depletion of progenitor cells cause severe muscle hypotrophy in Delta1 mutants.</title>
        <authorList>
            <person name="Schuster-Gossler K."/>
            <person name="Cordes R."/>
            <person name="Gossler A."/>
        </authorList>
    </citation>
    <scope>DEVELOPMENTAL STAGE</scope>
    <scope>DISRUPTION PHENOTYPE</scope>
    <scope>FUNCTION</scope>
</reference>
<reference key="14">
    <citation type="journal article" date="2008" name="Development">
        <title>Selection of differentiating cells by different levels of delta-like 1 among neural precursor cells in the developing mouse telencephalon.</title>
        <authorList>
            <person name="Kawaguchi D."/>
            <person name="Yoshimatsu T."/>
            <person name="Hozumi K."/>
            <person name="Gotoh Y."/>
        </authorList>
    </citation>
    <scope>FUNCTION</scope>
    <scope>DEVELOPMENTAL STAGE</scope>
    <scope>DISRUPTION PHENOTYPE</scope>
</reference>
<reference key="15">
    <citation type="journal article" date="2008" name="J. Invest. Dermatol.">
        <title>Role of the Notch ligand Delta1 in embryonic and adult mouse epidermis.</title>
        <authorList>
            <person name="Estrach S."/>
            <person name="Cordes R."/>
            <person name="Hozumi K."/>
            <person name="Gossler A."/>
            <person name="Watt F.M."/>
        </authorList>
    </citation>
    <scope>FUNCTION</scope>
    <scope>DISRUPTION PHENOTYPE</scope>
</reference>
<reference key="16">
    <citation type="journal article" date="2008" name="Proc. Natl. Acad. Sci. U.S.A.">
        <title>The intracellular region of Notch ligands Dll1 and Dll3 regulates their trafficking and signaling activity.</title>
        <authorList>
            <person name="Heuss S.F."/>
            <person name="Ndiaye-Lobry D."/>
            <person name="Six E.M."/>
            <person name="Israel A."/>
            <person name="Logeat F."/>
        </authorList>
    </citation>
    <scope>UBIQUITINATION</scope>
    <scope>FUNCTION</scope>
    <scope>SUBCELLULAR LOCATION</scope>
</reference>
<reference key="17">
    <citation type="journal article" date="2009" name="Biochem. Biophys. Res. Commun.">
        <title>Neuralized-2: Expression in human and rodents and interaction with Delta-like ligands.</title>
        <authorList>
            <person name="Rullinkov G."/>
            <person name="Tamme R."/>
            <person name="Sarapuu A."/>
            <person name="Lauren J."/>
            <person name="Sepp M."/>
            <person name="Palm K."/>
            <person name="Timmusk T."/>
        </authorList>
    </citation>
    <scope>INTERACTION WITH NEURL1 AND NEURL1B</scope>
</reference>
<reference key="18">
    <citation type="journal article" date="2009" name="Blood">
        <title>DLL1-mediated Notch activation regulates endothelial identity in mouse fetal arteries.</title>
        <authorList>
            <person name="Soerensen I."/>
            <person name="Adams R.H."/>
            <person name="Gossler A."/>
        </authorList>
    </citation>
    <scope>DEVELOPMENTAL STAGE</scope>
    <scope>DISRUPTION PHENOTYPE</scope>
    <scope>FUNCTION</scope>
</reference>
<reference key="19">
    <citation type="journal article" date="2009" name="Dev. Biol.">
        <title>Dll1 and Dll4 function sequentially in the retina and pV2 domain of the spinal cord to regulate neurogenesis and create cell diversity.</title>
        <authorList>
            <person name="Rocha S.F."/>
            <person name="Lopes S.S."/>
            <person name="Gossler A."/>
            <person name="Henrique D."/>
        </authorList>
    </citation>
    <scope>FUNCTION</scope>
    <scope>DEVELOPMENTAL STAGE</scope>
</reference>
<reference key="20">
    <citation type="journal article" date="2009" name="Immunity">
        <title>Lunatic and manic fringe cooperatively enhance marginal zone B cell precursor competition for delta-like 1 in splenic endothelial niches.</title>
        <authorList>
            <person name="Tan J.B."/>
            <person name="Xu K."/>
            <person name="Cretegny K."/>
            <person name="Visan I."/>
            <person name="Yuan J.S."/>
            <person name="Egan S.E."/>
            <person name="Guidos C.J."/>
        </authorList>
    </citation>
    <scope>FUNCTION</scope>
</reference>
<reference key="21">
    <citation type="journal article" date="2009" name="PLoS ONE">
        <title>Dll1 haploinsufficiency in adult mice leads to a complex phenotype affecting metabolic and immunological processes.</title>
        <authorList>
            <person name="Rubio-Aliaga I."/>
            <person name="Przemeck G.K."/>
            <person name="Fuchs H."/>
            <person name="Gailus-Durner V."/>
            <person name="Adler T."/>
            <person name="Hans W."/>
            <person name="Horsch M."/>
            <person name="Rathkolb B."/>
            <person name="Rozman J."/>
            <person name="Schrewe A."/>
            <person name="Wagner S."/>
            <person name="Hoelter S.M."/>
            <person name="Becker L."/>
            <person name="Klopstock T."/>
            <person name="Wurst W."/>
            <person name="Wolf E."/>
            <person name="Klingenspor M."/>
            <person name="Ivandic B.T."/>
            <person name="Busch D.H."/>
            <person name="Beckers J."/>
            <person name="Hrabe de Angelis M."/>
        </authorList>
    </citation>
    <scope>DISRUPTION PHENOTYPE</scope>
    <scope>FUNCTION</scope>
</reference>
<reference key="22">
    <citation type="journal article" date="2010" name="Development">
        <title>Domain-specific control of neurogenesis achieved through patterned regulation of Notch ligand expression.</title>
        <authorList>
            <person name="Marklund U."/>
            <person name="Hansson E.M."/>
            <person name="Sundstroem E."/>
            <person name="de Angelis M.H."/>
            <person name="Przemeck G.K."/>
            <person name="Lendahl U."/>
            <person name="Muhr J."/>
            <person name="Ericson J."/>
        </authorList>
    </citation>
    <scope>FUNCTION</scope>
</reference>
<reference key="23">
    <citation type="journal article" date="2011" name="Biochim. Biophys. Acta">
        <title>Delta-like 1-Lysine613 regulates notch signaling.</title>
        <authorList>
            <person name="Zhang L."/>
            <person name="Widau R.C."/>
            <person name="Herring B.P."/>
            <person name="Gallagher P.J."/>
        </authorList>
    </citation>
    <scope>MUTAGENESIS OF 613-LYS--LYS-618; LYS-613; LYS-689; LYS-699 AND LYS-713</scope>
    <scope>INTERACTION WITH MIB1</scope>
    <scope>SUBCELLULAR LOCATION</scope>
    <scope>FUNCTION</scope>
    <scope>UBIQUITINATION AT LYS-613</scope>
</reference>
<reference key="24">
    <citation type="journal article" date="2011" name="Gastroenterology">
        <title>Dll1- and dll4-mediated notch signaling are required for homeostasis of intestinal stem cells.</title>
        <authorList>
            <person name="Pellegrinet L."/>
            <person name="Rodilla V."/>
            <person name="Liu Z."/>
            <person name="Chen S."/>
            <person name="Koch U."/>
            <person name="Espinosa L."/>
            <person name="Kaestner K.H."/>
            <person name="Kopan R."/>
            <person name="Lewis J."/>
            <person name="Radtke F."/>
        </authorList>
    </citation>
    <scope>FUNCTION</scope>
</reference>
<reference key="25">
    <citation type="journal article" date="2011" name="PLoS ONE">
        <title>Delta1 expression, cell cycle exit, and commitment to a specific secretory fate coincide within a few hours in the mouse intestinal stem cell system.</title>
        <authorList>
            <person name="Stamataki D."/>
            <person name="Holder M."/>
            <person name="Hodgetts C."/>
            <person name="Jeffery R."/>
            <person name="Nye E."/>
            <person name="Spencer-Dene B."/>
            <person name="Winton D.J."/>
            <person name="Lewis J."/>
        </authorList>
    </citation>
    <scope>FUNCTION</scope>
</reference>
<reference key="26">
    <citation type="journal article" date="2012" name="Circ. Res.">
        <title>Extrinsic Notch ligand Delta-like 1 regulates tip cell selection and vascular branching morphogenesis.</title>
        <authorList>
            <person name="Napp L.C."/>
            <person name="Augustynik M."/>
            <person name="Paesler F."/>
            <person name="Krishnasamy K."/>
            <person name="Woiterski J."/>
            <person name="Limbourg A."/>
            <person name="Bauersachs J."/>
            <person name="Drexler H."/>
            <person name="Le Noble F."/>
            <person name="Limbourg F.P."/>
        </authorList>
    </citation>
    <scope>FUNCTION</scope>
</reference>
<reference key="27">
    <citation type="journal article" date="2012" name="Development">
        <title>Ptf1a-mediated control of Dll1 reveals an alternative to the lateral inhibition mechanism.</title>
        <authorList>
            <person name="Ahnfelt-Roenne J."/>
            <person name="Joergensen M.C."/>
            <person name="Klinck R."/>
            <person name="Jensen J.N."/>
            <person name="Fuechtbauer E.M."/>
            <person name="Deering T."/>
            <person name="MacDonald R.J."/>
            <person name="Wright C.V."/>
            <person name="Madsen O.D."/>
            <person name="Serup P."/>
        </authorList>
    </citation>
    <scope>FUNCTION</scope>
    <scope>INDUCTION</scope>
</reference>
<reference key="28">
    <citation type="journal article" date="2012" name="Dev. Biol.">
        <title>Cdx regulates Dll1 in multiple lineages.</title>
        <authorList>
            <person name="Grainger S."/>
            <person name="Lam J."/>
            <person name="Savory J.G."/>
            <person name="Mears A.J."/>
            <person name="Rijli F.M."/>
            <person name="Lohnes D."/>
        </authorList>
    </citation>
    <scope>INDUCTION</scope>
</reference>
<reference key="29">
    <citation type="journal article" date="2012" name="Dev. Cell">
        <title>Colonization of the satellite cell niche by skeletal muscle progenitor cells depends on Notch signals.</title>
        <authorList>
            <person name="Broehl D."/>
            <person name="Vasyutina E."/>
            <person name="Czajkowski M.T."/>
            <person name="Griger J."/>
            <person name="Rassek C."/>
            <person name="Rahn H.P."/>
            <person name="Purfuerst B."/>
            <person name="Wende H."/>
            <person name="Birchmeier C."/>
        </authorList>
    </citation>
    <scope>FUNCTION</scope>
</reference>
<reference key="30">
    <citation type="journal article" date="2012" name="Proc. Natl. Acad. Sci. U.S.A.">
        <title>Mind bomb 1 is required for pancreatic beta-cell formation.</title>
        <authorList>
            <person name="Horn S."/>
            <person name="Kobberup S."/>
            <person name="Joergensen M.C."/>
            <person name="Kalisz M."/>
            <person name="Klein T."/>
            <person name="Kageyama R."/>
            <person name="Gegg M."/>
            <person name="Lickert H."/>
            <person name="Lindner J."/>
            <person name="Magnuson M.A."/>
            <person name="Kong Y.Y."/>
            <person name="Serup P."/>
            <person name="Ahnfelt-Roenne J."/>
            <person name="Jensen J.N."/>
        </authorList>
    </citation>
    <scope>FUNCTION</scope>
</reference>
<reference key="31">
    <citation type="journal article" date="2013" name="Dev. Cell">
        <title>The extracellular domain of Notch2 increases its cell-surface abundance and ligand responsiveness during kidney development.</title>
        <authorList>
            <person name="Liu Z."/>
            <person name="Chen S."/>
            <person name="Boyle S."/>
            <person name="Zhu Y."/>
            <person name="Zhang A."/>
            <person name="Piwnica-Worms D.R."/>
            <person name="Ilagan M.X."/>
            <person name="Kopan R."/>
        </authorList>
    </citation>
    <scope>FUNCTION</scope>
</reference>
<reference key="32">
    <citation type="journal article" date="2013" name="J. Neurosci.">
        <title>Dynamic interactions between intermediate neurogenic progenitors and radial glia in embryonic mouse neocortex: potential role in Dll1-Notch signaling.</title>
        <authorList>
            <person name="Nelson B.R."/>
            <person name="Hodge R.D."/>
            <person name="Bedogni F."/>
            <person name="Hevner R.F."/>
        </authorList>
    </citation>
    <scope>FUNCTION</scope>
</reference>
<reference key="33">
    <citation type="journal article" date="2013" name="Mol. Brain">
        <title>Delta-like 1 regulates Bergmann glial monolayer formation during cerebellar development.</title>
        <authorList>
            <person name="Hiraoka Y."/>
            <person name="Komine O."/>
            <person name="Nagaoka M."/>
            <person name="Bai N."/>
            <person name="Hozumi K."/>
            <person name="Tanaka K."/>
        </authorList>
    </citation>
    <scope>DISRUPTION PHENOTYPE</scope>
    <scope>FUNCTION</scope>
</reference>
<reference key="34">
    <citation type="journal article" date="2013" name="Nat. Commun.">
        <title>Dll1 maintains quiescence of adult neural stem cells and segregates asymmetrically during mitosis.</title>
        <authorList>
            <person name="Kawaguchi D."/>
            <person name="Furutachi S."/>
            <person name="Kawai H."/>
            <person name="Hozumi K."/>
            <person name="Gotoh Y."/>
        </authorList>
    </citation>
    <scope>FUNCTION</scope>
</reference>
<reference key="35">
    <citation type="journal article" date="2014" name="Development">
        <title>Cadherin-based adhesions in the apical endfoot are required for active Notch signaling to control neurogenesis in vertebrates.</title>
        <authorList>
            <person name="Hatakeyama J."/>
            <person name="Wakamatsu Y."/>
            <person name="Nagafuchi A."/>
            <person name="Kageyama R."/>
            <person name="Shigemoto R."/>
            <person name="Shimamura K."/>
        </authorList>
    </citation>
    <scope>INTERACTION WITH TJP1</scope>
    <scope>SUBCELLULAR LOCATION</scope>
</reference>
<reference key="36">
    <citation type="journal article" date="2014" name="Dev. Biol.">
        <title>Divergent and conserved roles of Dll1 signaling in development of craniofacial and trunk muscle.</title>
        <authorList>
            <person name="Czajkowski M.T."/>
            <person name="Rassek C."/>
            <person name="Lenhard D.C."/>
            <person name="Broehl D."/>
            <person name="Birchmeier C."/>
        </authorList>
    </citation>
    <scope>FUNCTION</scope>
    <scope>DEVELOPMENTAL STAGE</scope>
    <scope>DISRUPTION PHENOTYPE</scope>
    <scope>TISSUE SPECIFICITY</scope>
</reference>
<reference key="37">
    <citation type="journal article" date="2014" name="Mol. Cell. Biol.">
        <title>S/T phosphorylation of DLL1 is required for full ligand activity in vitro but dispensable for DLL1 function in vivo during embryonic patterning and marginal zone B cell development.</title>
        <authorList>
            <person name="Braune E.B."/>
            <person name="Schuster-Gossler K."/>
            <person name="Lyszkiewicz M."/>
            <person name="Serth K."/>
            <person name="Preusse K."/>
            <person name="Madlung J."/>
            <person name="Macek B."/>
            <person name="Krueger A."/>
            <person name="Gossler A."/>
        </authorList>
    </citation>
    <scope>IDENTIFICATION BY MASS SPECTROMETRY</scope>
    <scope>PHOSPHORYLATION AT THR-638; SER-693 AND SER-696</scope>
    <scope>MUTAGENESIS OF THR-638; SER-693 AND SER-696</scope>
</reference>
<reference key="38">
    <citation type="journal article" date="2015" name="PLoS Genet.">
        <title>Context-dependent functional divergence of the Notch ligands DLL1 and DLL4 in vivo.</title>
        <authorList>
            <person name="Preusse K."/>
            <person name="Tveriakhina L."/>
            <person name="Schuster-Gossler K."/>
            <person name="Gaspar C."/>
            <person name="Rosa A.I."/>
            <person name="Henrique D."/>
            <person name="Gossler A."/>
            <person name="Stauber M."/>
        </authorList>
    </citation>
    <scope>FUNCTION</scope>
</reference>
<organism>
    <name type="scientific">Mus musculus</name>
    <name type="common">Mouse</name>
    <dbReference type="NCBI Taxonomy" id="10090"/>
    <lineage>
        <taxon>Eukaryota</taxon>
        <taxon>Metazoa</taxon>
        <taxon>Chordata</taxon>
        <taxon>Craniata</taxon>
        <taxon>Vertebrata</taxon>
        <taxon>Euteleostomi</taxon>
        <taxon>Mammalia</taxon>
        <taxon>Eutheria</taxon>
        <taxon>Euarchontoglires</taxon>
        <taxon>Glires</taxon>
        <taxon>Rodentia</taxon>
        <taxon>Myomorpha</taxon>
        <taxon>Muroidea</taxon>
        <taxon>Muridae</taxon>
        <taxon>Murinae</taxon>
        <taxon>Mus</taxon>
        <taxon>Mus</taxon>
    </lineage>
</organism>
<comment type="function">
    <text evidence="2 4 9 11 14 16 17 18 19 20 21 22 23 25 26 27 28 29 31 32 33 34 35 36 37 38 41 42 43">Transmembrane ligand protein of NOTCH1, NOTCH2 and NOTCH3 receptors that binds the extracellular domain (ECD) of Notch receptor in a cis and trans fashion manner (PubMed:10958687, PubMed:21985982). Following transinteraction, ligand cells produce mechanical force that depends of a clathrin-mediated endocytosis, requiring ligand ubiquitination, EPN1 interaction, and actin polymerisation; these events promote Notch receptor extracellular domain (NECD) transendocytosis and triggers Notch signaling through induction of cleavage, hyperphosphorylation, and nuclear accumulation of the intracellular domain of Notch receptors (NICD) (PubMed:10958687, PubMed:18676613). Is required for embryonic development and maintenance of adult stem cells in many different tissues and immune systeme; the DLL1-induced Notch signaling is mediated through an intercellular communication that regulates cell lineage, cell specification, cell patterning and morphogenesis through effects on differentiation and proliferation (PubMed:16495313, PubMed:17194759, PubMed:17960184, PubMed:18997111, PubMed:19144989, PubMed:19389377, PubMed:19562077, PubMed:20081190, PubMed:21238454, PubMed:21572390, PubMed:22096075, PubMed:22282195, PubMed:22529374, PubMed:22940113, PubMed:23688253, PubMed:23695674, PubMed:23699523, PubMed:23806616, PubMed:25220152, PubMed:26114479, PubMed:7671806). Plays a role in brain development at different level, namely by regulating neuronal differentiation of neural precursor cells via cell-cell interaction, most likely through the lateral inhibitory system in an endogenous level dependent-manner (PubMed:18997111, PubMed:7671806). During neocortex development, Dll1-Notch signaling transmission is mediated by dynamic interactions between intermediate neurogenic progenitors and radial glia; the cell-cell interactions are mediated via dynamic and transient elongation processes, likely to reactivate/maintain Notch activity in neighboring progenitors, and coordinate progenitor cell division and differentiation across radial and zonal boundaries (PubMed:23699523). During cerebellar development, regulates Bergmann glial monolayer formation and its morphological maturation through a Notch signaling pathway (PubMed:23688253). At the retina and spinal cord level, regulates neurogenesis by preventing the premature differentiation of neural progenitors and also by maintaining progenitors in spinal cord through Notch signaling pathway (PubMed:19389377, PubMed:26114479). Also controls neurogenesis of the neural tube in a progenitor domain-specific fashion along the dorsoventral axis (PubMed:20081190). Maintains quiescence of neural stem cells and plays a role as a fate determinant that segregates asymmetrically to one daughter cell during neural stem cells mitosis, resulting in neuronal differentiation in Dll1-inheriting cell (PubMed:23695674). Plays a role in immune systeme development, namely the development of all T-cells and marginal zone (MZ) B cells (PubMed:15146182, PubMed:19217325). Blocks the differentiation of progenitor cells into the B-cell lineage while promoting the emergence of a population of cells with the characteristics of a T-cell/NK-cell precursor (By similarity). Upon MMP14 cleavage, negatively regulates Notch signaling in haematopoietic progenitor cells to specifically maintain normal B-cell development in bone marrow (PubMed:21572390). Also plays a role during muscle development. During early development, inhibits myoblasts differentiation from the medial dermomyotomal lip and later regulates progenitor cell differentiation (PubMed:17194759). Directly modulates cell adhesion and basal lamina formation in satellite cells through Notch signaling. Maintains myogenic progenitors pool by suppressing differentiation through down-regulation of MYOD1 and is required for satellite cell homing and PAX7 expression (PubMed:22940113). During craniofacial and trunk myogenesis suppresses differentiation of cranial mesoderm-derived and somite-derived muscle via MYOD1 regulation but in cranial mesoderm-derived progenitors, is neither required for satellite cell homing nor for PAX7 expression (PubMed:25220152). Also plays a role during pancreatic cell development. During type B pancreatic cell development, may be involved in the initiation of proximodistal patterning in the early pancreatic epithelium (PubMed:22529374). Stimulates multipotent pancreatic progenitor cells proliferation and pancreatic growth by maintaining HES1 expression and PTF1A protein levels (PubMed:22096075). During fetal stages of development, is required to maintain arterial identity and the responsiveness of arterial endothelial cells for VEGFA through regulation of KDR activation and NRP1 expression (PubMed:19144989). Controls sprouting angiogenesis and subsequent vertical branch formation through regulation on tip cell differentiation (PubMed:22282195). Negatively regulates goblet cell differentiation in intestine and controls secretory fat commitment through lateral inhibition in small intestine (PubMed:21238454, PubMed:21915337). Plays a role during inner ear development; negatively regulates auditory hair cell differentiation (PubMed:16495313). Plays a role during nephron development through Notch signaling pathway (PubMed:23806616). Regulates growth, blood pressure and energy homeostasis (PubMed:19562077).</text>
</comment>
<comment type="subunit">
    <text evidence="2 4 10 12 13 15 24 27 29 40">Homodimer (PubMed:12794186). Interacts with TJP1 (PubMed:24715457). Interacts with MMP14; inhibits DLL1-induced Notch signaling (PubMed:21572390). Interacts with MAGI1 (via PDZ domain); forms a complex with CTNNB1 and CDH2 and promotes recruitment to the adherens junction and stabilization on the cell surface (PubMed:15908431). Interacts with PSEN1; undergoes a presenilin-dependent gamma-secretase cleavage that releases a Dll1-intracellular form (PubMed:12794186). Interacts with MFAP5 (PubMed:15788413). Interacts with MIB1 (PubMed:21985982). Interacts with NEURL1B; leads to ubiquitination (PubMed:17003037, PubMed:19723503). Interacts with NEURL1 (PubMed:19723503). Interacts with SYNJ2BP; enhances DLL1 protein stability, and promotes Notch signaling in endothelial cells (By similarity). Interacts with MAGI1, MAGI2, MAGI3 and MPDZ (By similarity). Interacts (via ubiquitin) with EPN1 (via IUM domain); binding with NOTCH1 attached to neighboring cell, promotes ligand ubiquitination and EPN1 interaction, leading to NECD transendocytosis and Notch signaling. Interacts with NOTCH1 (By similarity).</text>
</comment>
<comment type="interaction">
    <interactant intactId="EBI-297125">
        <id>Q61483</id>
    </interactant>
    <interactant intactId="EBI-297151">
        <id>Q9WVQ1</id>
        <label>Magi2</label>
    </interactant>
    <organismsDiffer>false</organismsDiffer>
    <experiments>3</experiments>
</comment>
<comment type="subcellular location">
    <subcellularLocation>
        <location evidence="40">Apical cell membrane</location>
        <topology evidence="40">Single-pass type I membrane protein</topology>
    </subcellularLocation>
    <subcellularLocation>
        <location evidence="13 40">Cell junction</location>
        <location evidence="13 40">Adherens junction</location>
    </subcellularLocation>
    <subcellularLocation>
        <location evidence="18 29">Membrane raft</location>
    </subcellularLocation>
    <text evidence="13 40">Distributed around adherens junction in the apical endfeet through interactions with MAGI1.</text>
</comment>
<comment type="subcellular location">
    <molecule>Dll1-derived cell-associated form</molecule>
    <subcellularLocation>
        <location evidence="10">Cell membrane</location>
    </subcellularLocation>
</comment>
<comment type="subcellular location">
    <molecule>Dll1-intracellular form</molecule>
    <subcellularLocation>
        <location evidence="10">Nucleus</location>
    </subcellularLocation>
</comment>
<comment type="tissue specificity">
    <text evidence="41 43">In the embryo, expressed in the paraxial mesoderm and nervous system. Expressed at high levels in adult heart and at lower levels, in adult lung. Highly expressed in satellite cells from masseter and tongue than in satellite cells from leg and extraocular muscle.? (PubMed:25220152).</text>
</comment>
<comment type="developmental stage">
    <text evidence="16 19 20 22 41 43">Expressed until 15 dpc. Expression then decreases and increases again in the adult. In differentiating somites, is expressed at low levels in cells emerging from the dorsomedial lip and subsequently throughout myotomes. In the limb buds, is found in myoblasts and myocytes but not in the progenitor cells (PubMed:17194759). Highly expressed in the endothelium and in the smooth muscle layer starting at 13.5 dpc in arterial vessels, but not in veins. At 12.5 dpc, there is no detectable expression in arteries or veins. This pattern persists until 18.5 dpc (PubMed:19144989). Strongly expressed in developing muscle of tongue, cheek, and in extraocular muscle at 11.5 dpc. Found at 18 dpc and P21 in head muscle (PubMed:25220152). Detected in a subset of cells in the ventricular zone (VZ), the intermediate zone (IZ) and the cortical plate (CP) of neocortex and in the ganglionic eminences at 13.5 dpc. At later stages, such as at 16.5 dpc, found in the VZ and IZ, but at very low levels in the CP of the neocortex (PubMed:18997111). Highly expressed in embryonic cells located in the ventricular zone (VZ) of the retinal neuroepithelium that form clusters; is first detected in cells located in the central retina. As the retina grows, expression spreads peripherally along the expanding neurogenic region, being always absent from the ciliary margin zone (CMZ) (PubMed:19389377).</text>
</comment>
<comment type="induction">
    <text evidence="30 31">Induced by PTF1A in multipotent pancreatic progenitor cells (PubMed:22096075). Induced by CDX1 and CDX2 during somitogenesis and goblet cell differentiation (PubMed:22015720).</text>
</comment>
<comment type="PTM">
    <text evidence="3 15 18 29">Ubiquitinated by MIB (MIB1 or MIB2), leading to its endocytosis and subsequent degradation. Ubiquitinated; promotes recycling back to the plasma membrane and confers a strong affinity for NOTCH1 (PubMed:18676613). Multi-ubiquitination of Lys-613 by MIB1 promotes both cis and trans-interaction with NOTCH1, as well as activation of Notch signaling (PubMed:21985982). Ubiquitinated by NEURL1B (PubMed:17003037).</text>
</comment>
<comment type="PTM">
    <text evidence="39">Phosphorylated in a membrane association-dependent manner. Phosphorylation at Ser-696 requires the presence of Ser-693, whereas phosphorylation at Thr-638 and Ser-693 occurs independently of the other sites. Phosphorylation is required for full ligand activity in vitro and affects surface presentation, ectodomain shedding, and endocytosis.</text>
</comment>
<comment type="PTM">
    <text evidence="10 27">Cleaved by MMP14; negatively regulates DLL1-induced Notch signaling in HPCs, modulating B-lymphocyte differentiation in bone marrow (PubMed:21572390). Undergoes two consecutive processing events: a shedding event, partially by ADAM10, that generates a soluble extracellular form and an intracellular membrane-anchored form, followed by a gamma-secretase cleavage releasing an intracellular fragment (PubMed:12794186).</text>
</comment>
<comment type="PTM">
    <text evidence="4">O-fucosylated. Can be elongated to a disaccharide by MFNG.</text>
</comment>
<comment type="disruption phenotype">
    <text evidence="14 16 17 19 20 23 35 41">Heterozygous Dll1 mice mutants are lighter and smaller, with altered fat to lean ratio and have increased blood pressure and a slight bradycardia. The animals have reduced cholesterol and triglyceride levels in blood (PubMed:19562077). Heterozygous Dll1 mice mutants and hypomorphic Dll1 mice mutants survive until birth, despite significantly reduced Notch activity (PubMed:17194759). Conditional knockout in inner ear leads to an early and excessive production of hair cells and have vestibular defects (PubMed:16495313). Conditional knockout in a small proportion of neural precursor cells reduces neurogenesis, whereas conditional knockout in a large proportion promotes premature neurogenesis (PubMed:18997111). Hypomorph Dll1 pups mutant survive until birth but are smaller. Conditional knockout Dll1 mice mutant in epidermis, survive and have no gross abnormalities (PubMed:17960184). Hypomorph Dll1 mice mutant survive until birth and have severe skeletal muscle defects (PubMed:19144989). Heterozygous Dll1 mutant embryos show disrupted muscle growth (PubMed:25220152). Conditional knockout Dll1 mice mutant show disorganization of Bergmann fibers, ectopic localization of Bergmann glia in the molecular layer and a reduction in the number of Bergmann glia (PubMed:23688253).</text>
</comment>
<feature type="signal peptide" evidence="5">
    <location>
        <begin position="1"/>
        <end position="17"/>
    </location>
</feature>
<feature type="chain" id="PRO_0000007507" description="Delta-like protein 1">
    <location>
        <begin position="18"/>
        <end position="722"/>
    </location>
</feature>
<feature type="chain" id="PRO_0000434830" description="Dll1-soluble form" evidence="10">
    <location>
        <begin position="18"/>
        <end position="535"/>
    </location>
</feature>
<feature type="chain" id="PRO_0000434831" description="Dll1-derived cell-associated form" evidence="10">
    <location>
        <begin position="536"/>
        <end position="722"/>
    </location>
</feature>
<feature type="chain" id="PRO_0000434832" description="Dll1-intracellular form" evidence="10">
    <location>
        <begin status="unknown"/>
        <end position="722"/>
    </location>
</feature>
<feature type="topological domain" description="Extracellular" evidence="5">
    <location>
        <begin position="18"/>
        <end position="545"/>
    </location>
</feature>
<feature type="transmembrane region" description="Helical" evidence="5">
    <location>
        <begin position="546"/>
        <end position="568"/>
    </location>
</feature>
<feature type="topological domain" description="Cytoplasmic" evidence="5">
    <location>
        <begin position="569"/>
        <end position="722"/>
    </location>
</feature>
<feature type="domain" description="DSL" evidence="7">
    <location>
        <begin position="176"/>
        <end position="220"/>
    </location>
</feature>
<feature type="domain" description="EGF-like 1" evidence="6">
    <location>
        <begin position="225"/>
        <end position="253"/>
    </location>
</feature>
<feature type="domain" description="EGF-like 2" evidence="6">
    <location>
        <begin position="256"/>
        <end position="284"/>
    </location>
</feature>
<feature type="domain" description="EGF-like 3" evidence="6">
    <location>
        <begin position="291"/>
        <end position="324"/>
    </location>
</feature>
<feature type="domain" description="EGF-like 4; calcium-binding" evidence="6">
    <location>
        <begin position="331"/>
        <end position="362"/>
    </location>
</feature>
<feature type="domain" description="EGF-like 5" evidence="6">
    <location>
        <begin position="369"/>
        <end position="401"/>
    </location>
</feature>
<feature type="domain" description="EGF-like 6" evidence="6">
    <location>
        <begin position="408"/>
        <end position="439"/>
    </location>
</feature>
<feature type="domain" description="EGF-like 7; calcium-binding" evidence="6">
    <location>
        <begin position="446"/>
        <end position="477"/>
    </location>
</feature>
<feature type="domain" description="EGF-like 8" evidence="6">
    <location>
        <begin position="484"/>
        <end position="515"/>
    </location>
</feature>
<feature type="region of interest" description="Disordered" evidence="8">
    <location>
        <begin position="655"/>
        <end position="697"/>
    </location>
</feature>
<feature type="region of interest" description="Interaction with MAGI1" evidence="13">
    <location>
        <begin position="719"/>
        <end position="722"/>
    </location>
</feature>
<feature type="compositionally biased region" description="Basic and acidic residues" evidence="8">
    <location>
        <begin position="655"/>
        <end position="664"/>
    </location>
</feature>
<feature type="site" description="Cleavage; by MMP14" evidence="27">
    <location>
        <begin position="527"/>
        <end position="528"/>
    </location>
</feature>
<feature type="site" description="Cleavage; by ADAM protease" evidence="10">
    <location>
        <begin position="535"/>
        <end position="536"/>
    </location>
</feature>
<feature type="modified residue" description="Phosphothreonine" evidence="39">
    <location>
        <position position="638"/>
    </location>
</feature>
<feature type="modified residue" description="Phosphoserine; by PKB" evidence="39">
    <location>
        <position position="693"/>
    </location>
</feature>
<feature type="modified residue" description="Phosphoserine" evidence="39">
    <location>
        <position position="696"/>
    </location>
</feature>
<feature type="glycosylation site" description="N-linked (GlcNAc...) asparagine" evidence="5">
    <location>
        <position position="476"/>
    </location>
</feature>
<feature type="disulfide bond" evidence="1">
    <location>
        <begin position="178"/>
        <end position="187"/>
    </location>
</feature>
<feature type="disulfide bond" evidence="1">
    <location>
        <begin position="191"/>
        <end position="203"/>
    </location>
</feature>
<feature type="disulfide bond" evidence="1">
    <location>
        <begin position="211"/>
        <end position="220"/>
    </location>
</feature>
<feature type="disulfide bond" evidence="1">
    <location>
        <begin position="225"/>
        <end position="236"/>
    </location>
</feature>
<feature type="disulfide bond" evidence="1">
    <location>
        <begin position="229"/>
        <end position="242"/>
    </location>
</feature>
<feature type="disulfide bond" evidence="1">
    <location>
        <begin position="244"/>
        <end position="253"/>
    </location>
</feature>
<feature type="disulfide bond" evidence="1">
    <location>
        <begin position="256"/>
        <end position="267"/>
    </location>
</feature>
<feature type="disulfide bond" evidence="1">
    <location>
        <begin position="262"/>
        <end position="273"/>
    </location>
</feature>
<feature type="disulfide bond" evidence="1">
    <location>
        <begin position="275"/>
        <end position="284"/>
    </location>
</feature>
<feature type="disulfide bond" evidence="1">
    <location>
        <begin position="291"/>
        <end position="303"/>
    </location>
</feature>
<feature type="disulfide bond" evidence="1">
    <location>
        <begin position="297"/>
        <end position="313"/>
    </location>
</feature>
<feature type="disulfide bond" evidence="1">
    <location>
        <begin position="315"/>
        <end position="324"/>
    </location>
</feature>
<feature type="disulfide bond" evidence="1">
    <location>
        <begin position="331"/>
        <end position="342"/>
    </location>
</feature>
<feature type="disulfide bond" evidence="1">
    <location>
        <begin position="336"/>
        <end position="351"/>
    </location>
</feature>
<feature type="disulfide bond" evidence="1">
    <location>
        <begin position="353"/>
        <end position="362"/>
    </location>
</feature>
<feature type="disulfide bond" evidence="1">
    <location>
        <begin position="369"/>
        <end position="380"/>
    </location>
</feature>
<feature type="disulfide bond" evidence="1">
    <location>
        <begin position="374"/>
        <end position="390"/>
    </location>
</feature>
<feature type="disulfide bond" evidence="1">
    <location>
        <begin position="392"/>
        <end position="401"/>
    </location>
</feature>
<feature type="disulfide bond" evidence="1">
    <location>
        <begin position="408"/>
        <end position="419"/>
    </location>
</feature>
<feature type="disulfide bond" evidence="1">
    <location>
        <begin position="413"/>
        <end position="428"/>
    </location>
</feature>
<feature type="disulfide bond" evidence="1">
    <location>
        <begin position="430"/>
        <end position="439"/>
    </location>
</feature>
<feature type="disulfide bond" evidence="1">
    <location>
        <begin position="446"/>
        <end position="457"/>
    </location>
</feature>
<feature type="disulfide bond" evidence="1">
    <location>
        <begin position="451"/>
        <end position="466"/>
    </location>
</feature>
<feature type="disulfide bond" evidence="1">
    <location>
        <begin position="468"/>
        <end position="477"/>
    </location>
</feature>
<feature type="disulfide bond" evidence="1">
    <location>
        <begin position="484"/>
        <end position="495"/>
    </location>
</feature>
<feature type="disulfide bond" evidence="1">
    <location>
        <begin position="489"/>
        <end position="504"/>
    </location>
</feature>
<feature type="disulfide bond" evidence="1">
    <location>
        <begin position="506"/>
        <end position="515"/>
    </location>
</feature>
<feature type="cross-link" description="Glycyl lysine isopeptide (Lys-Gly) (interchain with G-Cter in ubiquitin)" evidence="29">
    <location>
        <position position="613"/>
    </location>
</feature>
<feature type="mutagenesis site" description="Highly decreases Notch signaling pathway. Multi-ubiquitination pattern is reduced, although it does appear to be mono-ubiquitinated. Interacts with MIB1. Loss of cis interaction with NOTCH1." evidence="29">
    <original>KNTNKK</original>
    <variation>RNTNRR</variation>
    <location>
        <begin position="613"/>
        <end position="618"/>
    </location>
</feature>
<feature type="mutagenesis site" description="Highly decreases Notch signaling pathway. Multi-ubiquitination pattern is reduced, although it does appear to be mono-ubiquitinated. Interacts with MIB1. Loss of cis and trans interaction with NOTCH1. Increases its association with lipid raft microdomains." evidence="29">
    <original>K</original>
    <variation>R</variation>
    <location>
        <position position="613"/>
    </location>
</feature>
<feature type="mutagenesis site" description="Not phosphorylated; when associated with A-693 and A-696. Not phosphorylated and doesn't prevent phosphorylation at S-693 and S-696. Reduces NOTCH1 transactivation; when associated with A-693 and A-696. Reduces cell surface levels of proteins; when associated with A-693 and A-696. Increases ectodomain shedding; when associated with A-693 and A-696." evidence="39">
    <original>T</original>
    <variation>V</variation>
    <location>
        <position position="638"/>
    </location>
</feature>
<feature type="mutagenesis site" description="Decreases Notch signaling pathway." evidence="29">
    <original>K</original>
    <variation>R</variation>
    <location>
        <position position="689"/>
    </location>
</feature>
<feature type="mutagenesis site" description="Not phosphorylated; when associated with V-638 and A-696. Not phosphorylated and prevents phosphorylation at S-696. Reduces NOTCH1 transactivation; when associated with V-638 and A-696. Reduces cell surface levels of proteins; when associated with V-638 and A-696. Increases ectodomain shedding; when associated with V-638 and A-696." evidence="39">
    <original>S</original>
    <variation>A</variation>
    <location>
        <position position="693"/>
    </location>
</feature>
<feature type="mutagenesis site" description="Not phosphorylated; when associated with V-638 and A-693. Not phosphorylated and doesn't prevent phosphorylation at T-638 and S-693, Reduces NOTCH1 transactivation; when associated with V-638 and A-693. Reduces cell surface levels of proteins; when associated with V-638 and A-693. Increases ectodomain shedding; when associated with V-638 and A-693." evidence="39">
    <original>S</original>
    <variation>A</variation>
    <location>
        <position position="696"/>
    </location>
</feature>
<feature type="mutagenesis site" description="Decreases Notch signaling pathway." evidence="29">
    <original>K</original>
    <variation>R</variation>
    <location>
        <position position="699"/>
    </location>
</feature>
<feature type="mutagenesis site" description="Decreases Notch signaling pathway." evidence="29">
    <original>K</original>
    <variation>R</variation>
    <location>
        <position position="713"/>
    </location>
</feature>
<feature type="sequence conflict" description="In Ref. 1; CAA56865." evidence="45" ref="1">
    <original>E</original>
    <variation>K</variation>
    <location>
        <position position="628"/>
    </location>
</feature>
<protein>
    <recommendedName>
        <fullName evidence="45">Delta-like protein 1</fullName>
    </recommendedName>
    <alternativeName>
        <fullName>Drosophila Delta homolog 1</fullName>
        <shortName evidence="44">Delta1</shortName>
    </alternativeName>
    <component>
        <recommendedName>
            <fullName evidence="44">Dll1-soluble form</fullName>
            <shortName evidence="46">Dll1-EC</shortName>
            <shortName evidence="44">Shed form</shortName>
        </recommendedName>
    </component>
    <component>
        <recommendedName>
            <fullName evidence="44">Dll1-derived cell-associated form</fullName>
            <shortName evidence="46">Dll1-TMIC</shortName>
            <shortName evidence="44">Membrane-associated fragment</shortName>
        </recommendedName>
    </component>
    <component>
        <recommendedName>
            <fullName evidence="44">Dll1-intracellular form</fullName>
            <shortName evidence="46">Dll1-IC</shortName>
        </recommendedName>
    </component>
</protein>